<protein>
    <recommendedName>
        <fullName evidence="1">Ribonuclease 3</fullName>
        <ecNumber evidence="1">3.1.26.3</ecNumber>
    </recommendedName>
    <alternativeName>
        <fullName evidence="1">Ribonuclease III</fullName>
        <shortName evidence="1">RNase III</shortName>
    </alternativeName>
</protein>
<evidence type="ECO:0000255" key="1">
    <source>
        <dbReference type="HAMAP-Rule" id="MF_00104"/>
    </source>
</evidence>
<reference key="1">
    <citation type="journal article" date="2005" name="Infect. Immun.">
        <title>Comparative genomic analysis of Chlamydia trachomatis oculotropic and genitotropic strains.</title>
        <authorList>
            <person name="Carlson J.H."/>
            <person name="Porcella S.F."/>
            <person name="McClarty G."/>
            <person name="Caldwell H.D."/>
        </authorList>
    </citation>
    <scope>NUCLEOTIDE SEQUENCE [LARGE SCALE GENOMIC DNA]</scope>
    <source>
        <strain>ATCC VR-571B / DSM 19440 / HAR-13</strain>
    </source>
</reference>
<proteinExistence type="inferred from homology"/>
<sequence length="231" mass="25561">MQHTVDIQAIESKLNFTFSHPRLLITALTHPSYRNEFPSAEEDSERLEFLGDAVLGLVVTEHLFLLFPALNEGLLSTTRAALVNAEACFEYTQKLSLGEHLLIGRGEKMQSHRGKISAYANLLEAILGAVYLDGGLSPARQIIVPLLPDKESILPLMLVNPKNRLQQFTQQTLKVLPSYKALPWKSEDGSPGYHVQVFVNGDLWGEGFAGSKKEAEKLAAKQALSTHDNKN</sequence>
<name>RNC_CHLTA</name>
<gene>
    <name evidence="1" type="primary">rnc</name>
    <name type="ordered locus">CTA_0319</name>
</gene>
<dbReference type="EC" id="3.1.26.3" evidence="1"/>
<dbReference type="EMBL" id="CP000051">
    <property type="protein sequence ID" value="AAX50557.1"/>
    <property type="molecule type" value="Genomic_DNA"/>
</dbReference>
<dbReference type="RefSeq" id="WP_009871645.1">
    <property type="nucleotide sequence ID" value="NC_007429.1"/>
</dbReference>
<dbReference type="SMR" id="Q3KM65"/>
<dbReference type="KEGG" id="cta:CTA_0319"/>
<dbReference type="HOGENOM" id="CLU_000907_1_3_0"/>
<dbReference type="Proteomes" id="UP000002532">
    <property type="component" value="Chromosome"/>
</dbReference>
<dbReference type="GO" id="GO:0005737">
    <property type="term" value="C:cytoplasm"/>
    <property type="evidence" value="ECO:0007669"/>
    <property type="project" value="UniProtKB-SubCell"/>
</dbReference>
<dbReference type="GO" id="GO:0003725">
    <property type="term" value="F:double-stranded RNA binding"/>
    <property type="evidence" value="ECO:0007669"/>
    <property type="project" value="TreeGrafter"/>
</dbReference>
<dbReference type="GO" id="GO:0046872">
    <property type="term" value="F:metal ion binding"/>
    <property type="evidence" value="ECO:0007669"/>
    <property type="project" value="UniProtKB-KW"/>
</dbReference>
<dbReference type="GO" id="GO:0004525">
    <property type="term" value="F:ribonuclease III activity"/>
    <property type="evidence" value="ECO:0007669"/>
    <property type="project" value="UniProtKB-UniRule"/>
</dbReference>
<dbReference type="GO" id="GO:0019843">
    <property type="term" value="F:rRNA binding"/>
    <property type="evidence" value="ECO:0007669"/>
    <property type="project" value="UniProtKB-KW"/>
</dbReference>
<dbReference type="GO" id="GO:0006397">
    <property type="term" value="P:mRNA processing"/>
    <property type="evidence" value="ECO:0007669"/>
    <property type="project" value="UniProtKB-UniRule"/>
</dbReference>
<dbReference type="GO" id="GO:0010468">
    <property type="term" value="P:regulation of gene expression"/>
    <property type="evidence" value="ECO:0007669"/>
    <property type="project" value="TreeGrafter"/>
</dbReference>
<dbReference type="GO" id="GO:0006364">
    <property type="term" value="P:rRNA processing"/>
    <property type="evidence" value="ECO:0007669"/>
    <property type="project" value="UniProtKB-UniRule"/>
</dbReference>
<dbReference type="GO" id="GO:0008033">
    <property type="term" value="P:tRNA processing"/>
    <property type="evidence" value="ECO:0007669"/>
    <property type="project" value="UniProtKB-KW"/>
</dbReference>
<dbReference type="CDD" id="cd10845">
    <property type="entry name" value="DSRM_RNAse_III_family"/>
    <property type="match status" value="1"/>
</dbReference>
<dbReference type="CDD" id="cd00593">
    <property type="entry name" value="RIBOc"/>
    <property type="match status" value="1"/>
</dbReference>
<dbReference type="FunFam" id="1.10.1520.10:FF:000027">
    <property type="entry name" value="Ribonuclease 3"/>
    <property type="match status" value="1"/>
</dbReference>
<dbReference type="FunFam" id="3.30.160.20:FF:000083">
    <property type="entry name" value="Ribonuclease 3"/>
    <property type="match status" value="1"/>
</dbReference>
<dbReference type="Gene3D" id="3.30.160.20">
    <property type="match status" value="1"/>
</dbReference>
<dbReference type="Gene3D" id="1.10.1520.10">
    <property type="entry name" value="Ribonuclease III domain"/>
    <property type="match status" value="1"/>
</dbReference>
<dbReference type="HAMAP" id="MF_00104">
    <property type="entry name" value="RNase_III"/>
    <property type="match status" value="1"/>
</dbReference>
<dbReference type="InterPro" id="IPR014720">
    <property type="entry name" value="dsRBD_dom"/>
</dbReference>
<dbReference type="InterPro" id="IPR011907">
    <property type="entry name" value="RNase_III"/>
</dbReference>
<dbReference type="InterPro" id="IPR000999">
    <property type="entry name" value="RNase_III_dom"/>
</dbReference>
<dbReference type="InterPro" id="IPR036389">
    <property type="entry name" value="RNase_III_sf"/>
</dbReference>
<dbReference type="NCBIfam" id="TIGR02191">
    <property type="entry name" value="RNaseIII"/>
    <property type="match status" value="1"/>
</dbReference>
<dbReference type="PANTHER" id="PTHR11207:SF0">
    <property type="entry name" value="RIBONUCLEASE 3"/>
    <property type="match status" value="1"/>
</dbReference>
<dbReference type="PANTHER" id="PTHR11207">
    <property type="entry name" value="RIBONUCLEASE III"/>
    <property type="match status" value="1"/>
</dbReference>
<dbReference type="Pfam" id="PF00035">
    <property type="entry name" value="dsrm"/>
    <property type="match status" value="1"/>
</dbReference>
<dbReference type="Pfam" id="PF14622">
    <property type="entry name" value="Ribonucleas_3_3"/>
    <property type="match status" value="1"/>
</dbReference>
<dbReference type="SMART" id="SM00358">
    <property type="entry name" value="DSRM"/>
    <property type="match status" value="1"/>
</dbReference>
<dbReference type="SMART" id="SM00535">
    <property type="entry name" value="RIBOc"/>
    <property type="match status" value="1"/>
</dbReference>
<dbReference type="SUPFAM" id="SSF54768">
    <property type="entry name" value="dsRNA-binding domain-like"/>
    <property type="match status" value="1"/>
</dbReference>
<dbReference type="SUPFAM" id="SSF69065">
    <property type="entry name" value="RNase III domain-like"/>
    <property type="match status" value="1"/>
</dbReference>
<dbReference type="PROSITE" id="PS50137">
    <property type="entry name" value="DS_RBD"/>
    <property type="match status" value="1"/>
</dbReference>
<dbReference type="PROSITE" id="PS00517">
    <property type="entry name" value="RNASE_3_1"/>
    <property type="match status" value="1"/>
</dbReference>
<dbReference type="PROSITE" id="PS50142">
    <property type="entry name" value="RNASE_3_2"/>
    <property type="match status" value="1"/>
</dbReference>
<feature type="chain" id="PRO_0000228513" description="Ribonuclease 3">
    <location>
        <begin position="1"/>
        <end position="231"/>
    </location>
</feature>
<feature type="domain" description="RNase III" evidence="1">
    <location>
        <begin position="7"/>
        <end position="135"/>
    </location>
</feature>
<feature type="domain" description="DRBM" evidence="1">
    <location>
        <begin position="160"/>
        <end position="229"/>
    </location>
</feature>
<feature type="active site" evidence="1">
    <location>
        <position position="52"/>
    </location>
</feature>
<feature type="active site" evidence="1">
    <location>
        <position position="124"/>
    </location>
</feature>
<feature type="binding site" evidence="1">
    <location>
        <position position="48"/>
    </location>
    <ligand>
        <name>Mg(2+)</name>
        <dbReference type="ChEBI" id="CHEBI:18420"/>
    </ligand>
</feature>
<feature type="binding site" evidence="1">
    <location>
        <position position="121"/>
    </location>
    <ligand>
        <name>Mg(2+)</name>
        <dbReference type="ChEBI" id="CHEBI:18420"/>
    </ligand>
</feature>
<feature type="binding site" evidence="1">
    <location>
        <position position="124"/>
    </location>
    <ligand>
        <name>Mg(2+)</name>
        <dbReference type="ChEBI" id="CHEBI:18420"/>
    </ligand>
</feature>
<organism>
    <name type="scientific">Chlamydia trachomatis serovar A (strain ATCC VR-571B / DSM 19440 / HAR-13)</name>
    <dbReference type="NCBI Taxonomy" id="315277"/>
    <lineage>
        <taxon>Bacteria</taxon>
        <taxon>Pseudomonadati</taxon>
        <taxon>Chlamydiota</taxon>
        <taxon>Chlamydiia</taxon>
        <taxon>Chlamydiales</taxon>
        <taxon>Chlamydiaceae</taxon>
        <taxon>Chlamydia/Chlamydophila group</taxon>
        <taxon>Chlamydia</taxon>
    </lineage>
</organism>
<comment type="function">
    <text evidence="1">Digests double-stranded RNA. Involved in the processing of primary rRNA transcript to yield the immediate precursors to the large and small rRNAs (23S and 16S). Processes some mRNAs, and tRNAs when they are encoded in the rRNA operon. Processes pre-crRNA and tracrRNA of type II CRISPR loci if present in the organism.</text>
</comment>
<comment type="catalytic activity">
    <reaction evidence="1">
        <text>Endonucleolytic cleavage to 5'-phosphomonoester.</text>
        <dbReference type="EC" id="3.1.26.3"/>
    </reaction>
</comment>
<comment type="cofactor">
    <cofactor evidence="1">
        <name>Mg(2+)</name>
        <dbReference type="ChEBI" id="CHEBI:18420"/>
    </cofactor>
</comment>
<comment type="subunit">
    <text evidence="1">Homodimer.</text>
</comment>
<comment type="subcellular location">
    <subcellularLocation>
        <location evidence="1">Cytoplasm</location>
    </subcellularLocation>
</comment>
<comment type="similarity">
    <text evidence="1">Belongs to the ribonuclease III family.</text>
</comment>
<accession>Q3KM65</accession>
<keyword id="KW-0963">Cytoplasm</keyword>
<keyword id="KW-0255">Endonuclease</keyword>
<keyword id="KW-0378">Hydrolase</keyword>
<keyword id="KW-0460">Magnesium</keyword>
<keyword id="KW-0479">Metal-binding</keyword>
<keyword id="KW-0507">mRNA processing</keyword>
<keyword id="KW-0540">Nuclease</keyword>
<keyword id="KW-0694">RNA-binding</keyword>
<keyword id="KW-0698">rRNA processing</keyword>
<keyword id="KW-0699">rRNA-binding</keyword>
<keyword id="KW-0819">tRNA processing</keyword>